<dbReference type="EMBL" id="AE016826">
    <property type="protein sequence ID" value="AAO26812.1"/>
    <property type="molecule type" value="Genomic_DNA"/>
</dbReference>
<dbReference type="SMR" id="Q89AZ2"/>
<dbReference type="STRING" id="224915.bbp_076"/>
<dbReference type="KEGG" id="bab:bbp_076"/>
<dbReference type="eggNOG" id="COG1338">
    <property type="taxonomic scope" value="Bacteria"/>
</dbReference>
<dbReference type="eggNOG" id="COG3190">
    <property type="taxonomic scope" value="Bacteria"/>
</dbReference>
<dbReference type="HOGENOM" id="CLU_813433_0_0_6"/>
<dbReference type="OrthoDB" id="9805111at2"/>
<dbReference type="Proteomes" id="UP000000601">
    <property type="component" value="Chromosome"/>
</dbReference>
<dbReference type="GO" id="GO:0009425">
    <property type="term" value="C:bacterial-type flagellum basal body"/>
    <property type="evidence" value="ECO:0007669"/>
    <property type="project" value="UniProtKB-SubCell"/>
</dbReference>
<dbReference type="GO" id="GO:0005886">
    <property type="term" value="C:plasma membrane"/>
    <property type="evidence" value="ECO:0007669"/>
    <property type="project" value="UniProtKB-SubCell"/>
</dbReference>
<dbReference type="GO" id="GO:0044781">
    <property type="term" value="P:bacterial-type flagellum organization"/>
    <property type="evidence" value="ECO:0007669"/>
    <property type="project" value="UniProtKB-KW"/>
</dbReference>
<dbReference type="GO" id="GO:0009306">
    <property type="term" value="P:protein secretion"/>
    <property type="evidence" value="ECO:0007669"/>
    <property type="project" value="InterPro"/>
</dbReference>
<dbReference type="InterPro" id="IPR022781">
    <property type="entry name" value="Flagellar_biosynth_FliO"/>
</dbReference>
<dbReference type="InterPro" id="IPR005837">
    <property type="entry name" value="FliP"/>
</dbReference>
<dbReference type="InterPro" id="IPR005838">
    <property type="entry name" value="T3SS_IM_P"/>
</dbReference>
<dbReference type="NCBIfam" id="TIGR03500">
    <property type="entry name" value="FliO_TIGR"/>
    <property type="match status" value="1"/>
</dbReference>
<dbReference type="NCBIfam" id="TIGR01103">
    <property type="entry name" value="fliP"/>
    <property type="match status" value="1"/>
</dbReference>
<dbReference type="NCBIfam" id="NF009438">
    <property type="entry name" value="PRK12797.1"/>
    <property type="match status" value="1"/>
</dbReference>
<dbReference type="PANTHER" id="PTHR30587">
    <property type="entry name" value="FLAGELLAR BIOSYNTHETIC PROTEIN FLIP"/>
    <property type="match status" value="1"/>
</dbReference>
<dbReference type="PANTHER" id="PTHR30587:SF0">
    <property type="entry name" value="FLAGELLAR BIOSYNTHETIC PROTEIN FLIP"/>
    <property type="match status" value="1"/>
</dbReference>
<dbReference type="Pfam" id="PF04347">
    <property type="entry name" value="FliO"/>
    <property type="match status" value="1"/>
</dbReference>
<dbReference type="Pfam" id="PF00813">
    <property type="entry name" value="FliP"/>
    <property type="match status" value="1"/>
</dbReference>
<dbReference type="PRINTS" id="PR00951">
    <property type="entry name" value="FLGBIOSNFLIP"/>
</dbReference>
<dbReference type="PRINTS" id="PR01302">
    <property type="entry name" value="TYPE3IMPPROT"/>
</dbReference>
<dbReference type="PROSITE" id="PS01060">
    <property type="entry name" value="FLIP_1"/>
    <property type="match status" value="1"/>
</dbReference>
<dbReference type="PROSITE" id="PS01061">
    <property type="entry name" value="FLIP_2"/>
    <property type="match status" value="1"/>
</dbReference>
<organism>
    <name type="scientific">Buchnera aphidicola subsp. Baizongia pistaciae (strain Bp)</name>
    <dbReference type="NCBI Taxonomy" id="224915"/>
    <lineage>
        <taxon>Bacteria</taxon>
        <taxon>Pseudomonadati</taxon>
        <taxon>Pseudomonadota</taxon>
        <taxon>Gammaproteobacteria</taxon>
        <taxon>Enterobacterales</taxon>
        <taxon>Erwiniaceae</taxon>
        <taxon>Buchnera</taxon>
    </lineage>
</organism>
<gene>
    <name type="primary">fliP</name>
    <name type="ordered locus">bbp_076</name>
</gene>
<feature type="chain" id="PRO_0000191983" description="Flagellar biosynthetic protein FliP">
    <location>
        <begin position="1"/>
        <end position="360"/>
    </location>
</feature>
<feature type="transmembrane region" description="Helical" evidence="2">
    <location>
        <begin position="10"/>
        <end position="28"/>
    </location>
</feature>
<feature type="transmembrane region" description="Helical" evidence="2">
    <location>
        <begin position="115"/>
        <end position="137"/>
    </location>
</feature>
<feature type="transmembrane region" description="Helical" evidence="2">
    <location>
        <begin position="152"/>
        <end position="174"/>
    </location>
</feature>
<feature type="transmembrane region" description="Helical" evidence="2">
    <location>
        <begin position="203"/>
        <end position="220"/>
    </location>
</feature>
<feature type="transmembrane region" description="Helical" evidence="2">
    <location>
        <begin position="297"/>
        <end position="319"/>
    </location>
</feature>
<feature type="transmembrane region" description="Helical" evidence="2">
    <location>
        <begin position="332"/>
        <end position="351"/>
    </location>
</feature>
<reference key="1">
    <citation type="journal article" date="2003" name="Proc. Natl. Acad. Sci. U.S.A.">
        <title>Reductive genome evolution in Buchnera aphidicola.</title>
        <authorList>
            <person name="van Ham R.C.H.J."/>
            <person name="Kamerbeek J."/>
            <person name="Palacios C."/>
            <person name="Rausell C."/>
            <person name="Abascal F."/>
            <person name="Bastolla U."/>
            <person name="Fernandez J.M."/>
            <person name="Jimenez L."/>
            <person name="Postigo M."/>
            <person name="Silva F.J."/>
            <person name="Tamames J."/>
            <person name="Viguera E."/>
            <person name="Latorre A."/>
            <person name="Valencia A."/>
            <person name="Moran F."/>
            <person name="Moya A."/>
        </authorList>
    </citation>
    <scope>NUCLEOTIDE SEQUENCE [LARGE SCALE GENOMIC DNA]</scope>
    <source>
        <strain>Bp</strain>
    </source>
</reference>
<keyword id="KW-0975">Bacterial flagellum</keyword>
<keyword id="KW-1005">Bacterial flagellum biogenesis</keyword>
<keyword id="KW-1006">Bacterial flagellum protein export</keyword>
<keyword id="KW-1003">Cell membrane</keyword>
<keyword id="KW-0472">Membrane</keyword>
<keyword id="KW-0653">Protein transport</keyword>
<keyword id="KW-1185">Reference proteome</keyword>
<keyword id="KW-0812">Transmembrane</keyword>
<keyword id="KW-1133">Transmembrane helix</keyword>
<keyword id="KW-0813">Transport</keyword>
<protein>
    <recommendedName>
        <fullName>Flagellar biosynthetic protein FliP</fullName>
    </recommendedName>
</protein>
<sequence length="360" mass="40971">MLIDIMFEKIGISLFELVTSIIFISWIVKKFILDKNVIIQSYMKVESKISLGYNEKIIIVDIKDVRLVLGVTSKRIVHLYTLPPIVYKKSQDSLIKSSNVGYKRNNYIRTMWNKTMVYQIASLCVFLLFCPSYAYAGIPDVISHTSSDGGQIWSIPIQTLVFITSLTFIPTVLLMMTSFSRIVIVFSLLRSALGTPYSPPNQILVGLSLILTFFIMAPIFDKIYQDSYLPFSEDKISIDTAIVRGAKPLHKFMVNQTRQVDLEFFSKLANISTFSRKEEIPMRVLLPSFITSELKTAFQIGFTIFIPFLIIDLVVSSVLMSLGMMMVPPSTISLPFKLMLFVLVDGWQLLITSLTHSFYH</sequence>
<evidence type="ECO:0000250" key="1"/>
<evidence type="ECO:0000255" key="2"/>
<evidence type="ECO:0000305" key="3"/>
<name>FLIP_BUCBP</name>
<accession>Q89AZ2</accession>
<comment type="function">
    <text evidence="1">Plays a role in the flagellum-specific transport system.</text>
</comment>
<comment type="subcellular location">
    <subcellularLocation>
        <location evidence="3">Cell membrane</location>
        <topology evidence="3">Multi-pass membrane protein</topology>
    </subcellularLocation>
    <subcellularLocation>
        <location evidence="1">Bacterial flagellum basal body</location>
    </subcellularLocation>
</comment>
<comment type="similarity">
    <text evidence="3">Belongs to the FliP/MopC/SpaP family.</text>
</comment>
<proteinExistence type="inferred from homology"/>